<organism>
    <name type="scientific">Geobacillus kaustophilus (strain HTA426)</name>
    <dbReference type="NCBI Taxonomy" id="235909"/>
    <lineage>
        <taxon>Bacteria</taxon>
        <taxon>Bacillati</taxon>
        <taxon>Bacillota</taxon>
        <taxon>Bacilli</taxon>
        <taxon>Bacillales</taxon>
        <taxon>Anoxybacillaceae</taxon>
        <taxon>Geobacillus</taxon>
        <taxon>Geobacillus thermoleovorans group</taxon>
    </lineage>
</organism>
<accession>Q5KVD0</accession>
<protein>
    <recommendedName>
        <fullName evidence="1">Imidazole glycerol phosphate synthase subunit HisF</fullName>
        <ecNumber evidence="1">4.3.2.10</ecNumber>
    </recommendedName>
    <alternativeName>
        <fullName evidence="1">IGP synthase cyclase subunit</fullName>
    </alternativeName>
    <alternativeName>
        <fullName evidence="1">IGP synthase subunit HisF</fullName>
    </alternativeName>
    <alternativeName>
        <fullName evidence="1">ImGP synthase subunit HisF</fullName>
        <shortName evidence="1">IGPS subunit HisF</shortName>
    </alternativeName>
</protein>
<gene>
    <name evidence="1" type="primary">hisF</name>
    <name type="ordered locus">GK3071</name>
</gene>
<reference key="1">
    <citation type="journal article" date="2004" name="Nucleic Acids Res.">
        <title>Thermoadaptation trait revealed by the genome sequence of thermophilic Geobacillus kaustophilus.</title>
        <authorList>
            <person name="Takami H."/>
            <person name="Takaki Y."/>
            <person name="Chee G.-J."/>
            <person name="Nishi S."/>
            <person name="Shimamura S."/>
            <person name="Suzuki H."/>
            <person name="Matsui S."/>
            <person name="Uchiyama I."/>
        </authorList>
    </citation>
    <scope>NUCLEOTIDE SEQUENCE [LARGE SCALE GENOMIC DNA]</scope>
    <source>
        <strain>HTA426</strain>
    </source>
</reference>
<name>HIS6_GEOKA</name>
<comment type="function">
    <text evidence="1">IGPS catalyzes the conversion of PRFAR and glutamine to IGP, AICAR and glutamate. The HisF subunit catalyzes the cyclization activity that produces IGP and AICAR from PRFAR using the ammonia provided by the HisH subunit.</text>
</comment>
<comment type="catalytic activity">
    <reaction evidence="1">
        <text>5-[(5-phospho-1-deoxy-D-ribulos-1-ylimino)methylamino]-1-(5-phospho-beta-D-ribosyl)imidazole-4-carboxamide + L-glutamine = D-erythro-1-(imidazol-4-yl)glycerol 3-phosphate + 5-amino-1-(5-phospho-beta-D-ribosyl)imidazole-4-carboxamide + L-glutamate + H(+)</text>
        <dbReference type="Rhea" id="RHEA:24793"/>
        <dbReference type="ChEBI" id="CHEBI:15378"/>
        <dbReference type="ChEBI" id="CHEBI:29985"/>
        <dbReference type="ChEBI" id="CHEBI:58278"/>
        <dbReference type="ChEBI" id="CHEBI:58359"/>
        <dbReference type="ChEBI" id="CHEBI:58475"/>
        <dbReference type="ChEBI" id="CHEBI:58525"/>
        <dbReference type="EC" id="4.3.2.10"/>
    </reaction>
</comment>
<comment type="pathway">
    <text evidence="1">Amino-acid biosynthesis; L-histidine biosynthesis; L-histidine from 5-phospho-alpha-D-ribose 1-diphosphate: step 5/9.</text>
</comment>
<comment type="subunit">
    <text evidence="1">Heterodimer of HisH and HisF.</text>
</comment>
<comment type="subcellular location">
    <subcellularLocation>
        <location evidence="1">Cytoplasm</location>
    </subcellularLocation>
</comment>
<comment type="similarity">
    <text evidence="1">Belongs to the HisA/HisF family.</text>
</comment>
<feature type="chain" id="PRO_0000142159" description="Imidazole glycerol phosphate synthase subunit HisF">
    <location>
        <begin position="1"/>
        <end position="252"/>
    </location>
</feature>
<feature type="active site" evidence="1">
    <location>
        <position position="11"/>
    </location>
</feature>
<feature type="active site" evidence="1">
    <location>
        <position position="130"/>
    </location>
</feature>
<dbReference type="EC" id="4.3.2.10" evidence="1"/>
<dbReference type="EMBL" id="BA000043">
    <property type="protein sequence ID" value="BAD77356.1"/>
    <property type="molecule type" value="Genomic_DNA"/>
</dbReference>
<dbReference type="RefSeq" id="WP_011232541.1">
    <property type="nucleotide sequence ID" value="NC_006510.1"/>
</dbReference>
<dbReference type="SMR" id="Q5KVD0"/>
<dbReference type="STRING" id="235909.GK3071"/>
<dbReference type="GeneID" id="32064944"/>
<dbReference type="KEGG" id="gka:GK3071"/>
<dbReference type="eggNOG" id="COG0107">
    <property type="taxonomic scope" value="Bacteria"/>
</dbReference>
<dbReference type="HOGENOM" id="CLU_048577_4_0_9"/>
<dbReference type="UniPathway" id="UPA00031">
    <property type="reaction ID" value="UER00010"/>
</dbReference>
<dbReference type="Proteomes" id="UP000001172">
    <property type="component" value="Chromosome"/>
</dbReference>
<dbReference type="GO" id="GO:0005737">
    <property type="term" value="C:cytoplasm"/>
    <property type="evidence" value="ECO:0007669"/>
    <property type="project" value="UniProtKB-SubCell"/>
</dbReference>
<dbReference type="GO" id="GO:0000107">
    <property type="term" value="F:imidazoleglycerol-phosphate synthase activity"/>
    <property type="evidence" value="ECO:0007669"/>
    <property type="project" value="UniProtKB-UniRule"/>
</dbReference>
<dbReference type="GO" id="GO:0016829">
    <property type="term" value="F:lyase activity"/>
    <property type="evidence" value="ECO:0007669"/>
    <property type="project" value="UniProtKB-KW"/>
</dbReference>
<dbReference type="GO" id="GO:0000105">
    <property type="term" value="P:L-histidine biosynthetic process"/>
    <property type="evidence" value="ECO:0007669"/>
    <property type="project" value="UniProtKB-UniRule"/>
</dbReference>
<dbReference type="CDD" id="cd04731">
    <property type="entry name" value="HisF"/>
    <property type="match status" value="1"/>
</dbReference>
<dbReference type="FunFam" id="3.20.20.70:FF:000006">
    <property type="entry name" value="Imidazole glycerol phosphate synthase subunit HisF"/>
    <property type="match status" value="1"/>
</dbReference>
<dbReference type="Gene3D" id="3.20.20.70">
    <property type="entry name" value="Aldolase class I"/>
    <property type="match status" value="1"/>
</dbReference>
<dbReference type="HAMAP" id="MF_01013">
    <property type="entry name" value="HisF"/>
    <property type="match status" value="1"/>
</dbReference>
<dbReference type="InterPro" id="IPR013785">
    <property type="entry name" value="Aldolase_TIM"/>
</dbReference>
<dbReference type="InterPro" id="IPR006062">
    <property type="entry name" value="His_biosynth"/>
</dbReference>
<dbReference type="InterPro" id="IPR004651">
    <property type="entry name" value="HisF"/>
</dbReference>
<dbReference type="InterPro" id="IPR050064">
    <property type="entry name" value="IGPS_HisA/HisF"/>
</dbReference>
<dbReference type="InterPro" id="IPR011060">
    <property type="entry name" value="RibuloseP-bd_barrel"/>
</dbReference>
<dbReference type="NCBIfam" id="TIGR00735">
    <property type="entry name" value="hisF"/>
    <property type="match status" value="1"/>
</dbReference>
<dbReference type="PANTHER" id="PTHR21235:SF2">
    <property type="entry name" value="IMIDAZOLE GLYCEROL PHOSPHATE SYNTHASE HISHF"/>
    <property type="match status" value="1"/>
</dbReference>
<dbReference type="PANTHER" id="PTHR21235">
    <property type="entry name" value="IMIDAZOLE GLYCEROL PHOSPHATE SYNTHASE SUBUNIT HISF/H IGP SYNTHASE SUBUNIT HISF/H"/>
    <property type="match status" value="1"/>
</dbReference>
<dbReference type="Pfam" id="PF00977">
    <property type="entry name" value="His_biosynth"/>
    <property type="match status" value="1"/>
</dbReference>
<dbReference type="SUPFAM" id="SSF51366">
    <property type="entry name" value="Ribulose-phoshate binding barrel"/>
    <property type="match status" value="1"/>
</dbReference>
<proteinExistence type="inferred from homology"/>
<evidence type="ECO:0000255" key="1">
    <source>
        <dbReference type="HAMAP-Rule" id="MF_01013"/>
    </source>
</evidence>
<sequence>MITKRIIPCLDVKDGRVVKGVQFVQLRDAGDPVELAKAYDEQGADELVFLDISASHEGRKTMVDVVERVAAQLAIPFTVGGGIHSLEDMKRMLRAGADKVSLNTAAVLHPTLITEGADFFGSQCIVVAIDAKYDETLGSWRVYTHGGRNATNWEVVAWAQEAVRLGAGEILLTSMDADGGKNGFDIELTRRVSEAVPVPVIASGGAGKAEHFLEAFEKGKADAALAASIFHYKETSVGQVKAYLKEKGVNVR</sequence>
<keyword id="KW-0028">Amino-acid biosynthesis</keyword>
<keyword id="KW-0963">Cytoplasm</keyword>
<keyword id="KW-0368">Histidine biosynthesis</keyword>
<keyword id="KW-0456">Lyase</keyword>
<keyword id="KW-1185">Reference proteome</keyword>